<accession>Q5BK83</accession>
<protein>
    <recommendedName>
        <fullName>Transmembrane protein 106A</fullName>
    </recommendedName>
</protein>
<dbReference type="EMBL" id="BC091170">
    <property type="protein sequence ID" value="AAH91170.1"/>
    <property type="molecule type" value="mRNA"/>
</dbReference>
<dbReference type="RefSeq" id="NP_001020138.1">
    <property type="nucleotide sequence ID" value="NM_001024967.1"/>
</dbReference>
<dbReference type="RefSeq" id="XP_063124812.1">
    <property type="nucleotide sequence ID" value="XM_063268742.1"/>
</dbReference>
<dbReference type="RefSeq" id="XP_063124813.1">
    <property type="nucleotide sequence ID" value="XM_063268743.1"/>
</dbReference>
<dbReference type="RefSeq" id="XP_063124814.1">
    <property type="nucleotide sequence ID" value="XM_063268744.1"/>
</dbReference>
<dbReference type="SMR" id="Q5BK83"/>
<dbReference type="FunCoup" id="Q5BK83">
    <property type="interactions" value="49"/>
</dbReference>
<dbReference type="STRING" id="10116.ENSRNOP00000036228"/>
<dbReference type="iPTMnet" id="Q5BK83"/>
<dbReference type="PhosphoSitePlus" id="Q5BK83"/>
<dbReference type="PaxDb" id="10116-ENSRNOP00000036228"/>
<dbReference type="GeneID" id="287722"/>
<dbReference type="KEGG" id="rno:287722"/>
<dbReference type="UCSC" id="RGD:1309043">
    <property type="organism name" value="rat"/>
</dbReference>
<dbReference type="AGR" id="RGD:1309043"/>
<dbReference type="CTD" id="113277"/>
<dbReference type="RGD" id="1309043">
    <property type="gene designation" value="Tmem106a"/>
</dbReference>
<dbReference type="VEuPathDB" id="HostDB:ENSRNOG00000023628"/>
<dbReference type="eggNOG" id="ENOG502RY0I">
    <property type="taxonomic scope" value="Eukaryota"/>
</dbReference>
<dbReference type="HOGENOM" id="CLU_089337_1_0_1"/>
<dbReference type="InParanoid" id="Q5BK83"/>
<dbReference type="PhylomeDB" id="Q5BK83"/>
<dbReference type="TreeFam" id="TF328907"/>
<dbReference type="PRO" id="PR:Q5BK83"/>
<dbReference type="Proteomes" id="UP000002494">
    <property type="component" value="Chromosome 10"/>
</dbReference>
<dbReference type="Bgee" id="ENSRNOG00000023628">
    <property type="expression patterns" value="Expressed in kidney and 19 other cell types or tissues"/>
</dbReference>
<dbReference type="GO" id="GO:0005886">
    <property type="term" value="C:plasma membrane"/>
    <property type="evidence" value="ECO:0000250"/>
    <property type="project" value="UniProtKB"/>
</dbReference>
<dbReference type="GO" id="GO:0009101">
    <property type="term" value="P:glycoprotein biosynthetic process"/>
    <property type="evidence" value="ECO:0000250"/>
    <property type="project" value="UniProtKB"/>
</dbReference>
<dbReference type="GO" id="GO:0045087">
    <property type="term" value="P:innate immune response"/>
    <property type="evidence" value="ECO:0007669"/>
    <property type="project" value="UniProtKB-KW"/>
</dbReference>
<dbReference type="GO" id="GO:0042116">
    <property type="term" value="P:macrophage activation"/>
    <property type="evidence" value="ECO:0000250"/>
    <property type="project" value="UniProtKB"/>
</dbReference>
<dbReference type="GO" id="GO:0043123">
    <property type="term" value="P:positive regulation of canonical NF-kappaB signal transduction"/>
    <property type="evidence" value="ECO:0000250"/>
    <property type="project" value="UniProtKB"/>
</dbReference>
<dbReference type="GO" id="GO:0032731">
    <property type="term" value="P:positive regulation of interleukin-1 beta production"/>
    <property type="evidence" value="ECO:0000250"/>
    <property type="project" value="UniProtKB"/>
</dbReference>
<dbReference type="GO" id="GO:0032755">
    <property type="term" value="P:positive regulation of interleukin-6 production"/>
    <property type="evidence" value="ECO:0000250"/>
    <property type="project" value="UniProtKB"/>
</dbReference>
<dbReference type="GO" id="GO:0043410">
    <property type="term" value="P:positive regulation of MAPK cascade"/>
    <property type="evidence" value="ECO:0000250"/>
    <property type="project" value="UniProtKB"/>
</dbReference>
<dbReference type="GO" id="GO:0045348">
    <property type="term" value="P:positive regulation of MHC class II biosynthetic process"/>
    <property type="evidence" value="ECO:0000250"/>
    <property type="project" value="UniProtKB"/>
</dbReference>
<dbReference type="GO" id="GO:1904407">
    <property type="term" value="P:positive regulation of nitric oxide metabolic process"/>
    <property type="evidence" value="ECO:0000250"/>
    <property type="project" value="UniProtKB"/>
</dbReference>
<dbReference type="GO" id="GO:0032760">
    <property type="term" value="P:positive regulation of tumor necrosis factor production"/>
    <property type="evidence" value="ECO:0000250"/>
    <property type="project" value="UniProtKB"/>
</dbReference>
<dbReference type="InterPro" id="IPR009790">
    <property type="entry name" value="TMEM106"/>
</dbReference>
<dbReference type="InterPro" id="IPR048509">
    <property type="entry name" value="TMEM106_C"/>
</dbReference>
<dbReference type="InterPro" id="IPR048511">
    <property type="entry name" value="TMEM106_N"/>
</dbReference>
<dbReference type="PANTHER" id="PTHR28556:SF3">
    <property type="entry name" value="TRANSMEMBRANE PROTEIN 106A"/>
    <property type="match status" value="1"/>
</dbReference>
<dbReference type="PANTHER" id="PTHR28556">
    <property type="entry name" value="TRANSMEMBRANE PROTEIN 106B"/>
    <property type="match status" value="1"/>
</dbReference>
<dbReference type="Pfam" id="PF07092">
    <property type="entry name" value="TMEM106"/>
    <property type="match status" value="1"/>
</dbReference>
<dbReference type="Pfam" id="PF21002">
    <property type="entry name" value="TMEM106_N"/>
    <property type="match status" value="1"/>
</dbReference>
<gene>
    <name type="primary">Tmem106a</name>
</gene>
<comment type="function">
    <text evidence="1 2">Activates macrophages and polarizes them into M1-like macrophages through the activation of the MAPK and NF-kappaB signaling pathway. Upon activation, up-regulates the expression of CD80, CD86, CD69 and MHC II on macrophages, and induces the release of pro-inflammatory cytokines such as TNF, IL1B, IL6, CCL2 and nitric oxide (By similarity). May play a role in inhibition of proliferation and migration (By similarity).</text>
</comment>
<comment type="subcellular location">
    <subcellularLocation>
        <location evidence="1">Cell membrane</location>
        <topology evidence="3">Single-pass membrane protein</topology>
    </subcellularLocation>
</comment>
<comment type="similarity">
    <text evidence="5">Belongs to the TMEM106 family.</text>
</comment>
<keyword id="KW-1003">Cell membrane</keyword>
<keyword id="KW-0391">Immunity</keyword>
<keyword id="KW-0399">Innate immunity</keyword>
<keyword id="KW-0472">Membrane</keyword>
<keyword id="KW-1185">Reference proteome</keyword>
<keyword id="KW-0812">Transmembrane</keyword>
<keyword id="KW-1133">Transmembrane helix</keyword>
<proteinExistence type="evidence at transcript level"/>
<reference key="1">
    <citation type="journal article" date="2004" name="Genome Res.">
        <title>The status, quality, and expansion of the NIH full-length cDNA project: the Mammalian Gene Collection (MGC).</title>
        <authorList>
            <consortium name="The MGC Project Team"/>
        </authorList>
    </citation>
    <scope>NUCLEOTIDE SEQUENCE [LARGE SCALE MRNA]</scope>
    <source>
        <tissue>Testis</tissue>
    </source>
</reference>
<name>T106A_RAT</name>
<feature type="chain" id="PRO_0000242139" description="Transmembrane protein 106A">
    <location>
        <begin position="1"/>
        <end position="261"/>
    </location>
</feature>
<feature type="transmembrane region" description="Helical" evidence="3">
    <location>
        <begin position="93"/>
        <end position="113"/>
    </location>
</feature>
<feature type="region of interest" description="Disordered" evidence="4">
    <location>
        <begin position="1"/>
        <end position="22"/>
    </location>
</feature>
<feature type="compositionally biased region" description="Polar residues" evidence="4">
    <location>
        <begin position="1"/>
        <end position="10"/>
    </location>
</feature>
<organism>
    <name type="scientific">Rattus norvegicus</name>
    <name type="common">Rat</name>
    <dbReference type="NCBI Taxonomy" id="10116"/>
    <lineage>
        <taxon>Eukaryota</taxon>
        <taxon>Metazoa</taxon>
        <taxon>Chordata</taxon>
        <taxon>Craniata</taxon>
        <taxon>Vertebrata</taxon>
        <taxon>Euteleostomi</taxon>
        <taxon>Mammalia</taxon>
        <taxon>Eutheria</taxon>
        <taxon>Euarchontoglires</taxon>
        <taxon>Glires</taxon>
        <taxon>Rodentia</taxon>
        <taxon>Myomorpha</taxon>
        <taxon>Muroidea</taxon>
        <taxon>Muridae</taxon>
        <taxon>Murinae</taxon>
        <taxon>Rattus</taxon>
    </lineage>
</organism>
<sequence>MGKAFSQLTSQKDEDKSILPDNPAMASKAANYFSTGNRKPSHSCVPCEKAASTSFVTCPTCQGNGEIPQELEKQLVALIPYGDQRLKPRRTKLSVFLAVTICLLIFSLTIFFLYPRNIVVHPVGLNSSTVAFDETHVQLNMTNVLNITNSNFYPVTVTQLTAEVLHQTSVVGQVTSSLRLHIGPLASKQMPYEVASRILDENTYKICTWPKIRVHHILVNIQGALTCSYLTHPQQLPFESFEYVDCRENMSMPHLELPRPA</sequence>
<evidence type="ECO:0000250" key="1">
    <source>
        <dbReference type="UniProtKB" id="Q8VC04"/>
    </source>
</evidence>
<evidence type="ECO:0000250" key="2">
    <source>
        <dbReference type="UniProtKB" id="Q96A25"/>
    </source>
</evidence>
<evidence type="ECO:0000255" key="3"/>
<evidence type="ECO:0000256" key="4">
    <source>
        <dbReference type="SAM" id="MobiDB-lite"/>
    </source>
</evidence>
<evidence type="ECO:0000305" key="5"/>